<dbReference type="EMBL" id="AE007869">
    <property type="protein sequence ID" value="AAK86009.2"/>
    <property type="molecule type" value="Genomic_DNA"/>
</dbReference>
<dbReference type="RefSeq" id="NP_353224.2">
    <property type="nucleotide sequence ID" value="NC_003062.2"/>
</dbReference>
<dbReference type="RefSeq" id="WP_010970713.1">
    <property type="nucleotide sequence ID" value="NC_003062.2"/>
</dbReference>
<dbReference type="SMR" id="Q7D203"/>
<dbReference type="STRING" id="176299.Atu0189"/>
<dbReference type="EnsemblBacteria" id="AAK86009">
    <property type="protein sequence ID" value="AAK86009"/>
    <property type="gene ID" value="Atu0189"/>
</dbReference>
<dbReference type="GeneID" id="1132227"/>
<dbReference type="KEGG" id="atu:Atu0189"/>
<dbReference type="PATRIC" id="fig|176299.10.peg.180"/>
<dbReference type="eggNOG" id="COG4239">
    <property type="taxonomic scope" value="Bacteria"/>
</dbReference>
<dbReference type="HOGENOM" id="CLU_028518_1_0_5"/>
<dbReference type="OrthoDB" id="9766870at2"/>
<dbReference type="PhylomeDB" id="Q7D203"/>
<dbReference type="BioCyc" id="AGRO:ATU0189-MONOMER"/>
<dbReference type="Proteomes" id="UP000000813">
    <property type="component" value="Chromosome circular"/>
</dbReference>
<dbReference type="GO" id="GO:0005886">
    <property type="term" value="C:plasma membrane"/>
    <property type="evidence" value="ECO:0007669"/>
    <property type="project" value="UniProtKB-SubCell"/>
</dbReference>
<dbReference type="GO" id="GO:0042884">
    <property type="term" value="P:microcin transport"/>
    <property type="evidence" value="ECO:0007669"/>
    <property type="project" value="TreeGrafter"/>
</dbReference>
<dbReference type="GO" id="GO:0015833">
    <property type="term" value="P:peptide transport"/>
    <property type="evidence" value="ECO:0007669"/>
    <property type="project" value="UniProtKB-KW"/>
</dbReference>
<dbReference type="GO" id="GO:0015031">
    <property type="term" value="P:protein transport"/>
    <property type="evidence" value="ECO:0007669"/>
    <property type="project" value="UniProtKB-KW"/>
</dbReference>
<dbReference type="GO" id="GO:0055085">
    <property type="term" value="P:transmembrane transport"/>
    <property type="evidence" value="ECO:0007669"/>
    <property type="project" value="InterPro"/>
</dbReference>
<dbReference type="CDD" id="cd06261">
    <property type="entry name" value="TM_PBP2"/>
    <property type="match status" value="1"/>
</dbReference>
<dbReference type="FunFam" id="1.10.3720.10:FF:000005">
    <property type="entry name" value="Microcin C ABC transporter permease"/>
    <property type="match status" value="1"/>
</dbReference>
<dbReference type="Gene3D" id="1.10.3720.10">
    <property type="entry name" value="MetI-like"/>
    <property type="match status" value="1"/>
</dbReference>
<dbReference type="InterPro" id="IPR000515">
    <property type="entry name" value="MetI-like"/>
</dbReference>
<dbReference type="InterPro" id="IPR035906">
    <property type="entry name" value="MetI-like_sf"/>
</dbReference>
<dbReference type="InterPro" id="IPR025966">
    <property type="entry name" value="OppC_N"/>
</dbReference>
<dbReference type="PANTHER" id="PTHR30325:SF0">
    <property type="entry name" value="INNER MEMBRANE ABC TRANSPORTER PERMEASE PROTEIN YEJE"/>
    <property type="match status" value="1"/>
</dbReference>
<dbReference type="PANTHER" id="PTHR30325">
    <property type="entry name" value="MEMBRANE COMPONENT OF ABC TRANSPORTER"/>
    <property type="match status" value="1"/>
</dbReference>
<dbReference type="Pfam" id="PF00528">
    <property type="entry name" value="BPD_transp_1"/>
    <property type="match status" value="1"/>
</dbReference>
<dbReference type="Pfam" id="PF12911">
    <property type="entry name" value="OppC_N"/>
    <property type="match status" value="1"/>
</dbReference>
<dbReference type="SUPFAM" id="SSF161098">
    <property type="entry name" value="MetI-like"/>
    <property type="match status" value="1"/>
</dbReference>
<dbReference type="PROSITE" id="PS50928">
    <property type="entry name" value="ABC_TM1"/>
    <property type="match status" value="1"/>
</dbReference>
<gene>
    <name evidence="4" type="primary">yejE</name>
    <name evidence="7" type="ordered locus">Atu0189</name>
</gene>
<proteinExistence type="inferred from homology"/>
<keyword id="KW-0997">Cell inner membrane</keyword>
<keyword id="KW-1003">Cell membrane</keyword>
<keyword id="KW-0472">Membrane</keyword>
<keyword id="KW-0571">Peptide transport</keyword>
<keyword id="KW-0653">Protein transport</keyword>
<keyword id="KW-1185">Reference proteome</keyword>
<keyword id="KW-0812">Transmembrane</keyword>
<keyword id="KW-1133">Transmembrane helix</keyword>
<keyword id="KW-0813">Transport</keyword>
<name>YEJE_AGRFC</name>
<feature type="chain" id="PRO_0000460289" description="Peptidoglycan transport system permease protein YejE">
    <location>
        <begin position="1"/>
        <end position="381"/>
    </location>
</feature>
<feature type="transmembrane region" description="Helical" evidence="1">
    <location>
        <begin position="38"/>
        <end position="58"/>
    </location>
</feature>
<feature type="transmembrane region" description="Helical" evidence="1">
    <location>
        <begin position="183"/>
        <end position="203"/>
    </location>
</feature>
<feature type="transmembrane region" description="Helical" evidence="1">
    <location>
        <begin position="230"/>
        <end position="250"/>
    </location>
</feature>
<feature type="transmembrane region" description="Helical" evidence="1">
    <location>
        <begin position="292"/>
        <end position="312"/>
    </location>
</feature>
<feature type="transmembrane region" description="Helical" evidence="1">
    <location>
        <begin position="347"/>
        <end position="367"/>
    </location>
</feature>
<feature type="domain" description="ABC transmembrane type-1" evidence="2">
    <location>
        <begin position="179"/>
        <end position="371"/>
    </location>
</feature>
<reference key="1">
    <citation type="journal article" date="2001" name="Science">
        <title>The genome of the natural genetic engineer Agrobacterium tumefaciens C58.</title>
        <authorList>
            <person name="Wood D.W."/>
            <person name="Setubal J.C."/>
            <person name="Kaul R."/>
            <person name="Monks D.E."/>
            <person name="Kitajima J.P."/>
            <person name="Okura V.K."/>
            <person name="Zhou Y."/>
            <person name="Chen L."/>
            <person name="Wood G.E."/>
            <person name="Almeida N.F. Jr."/>
            <person name="Woo L."/>
            <person name="Chen Y."/>
            <person name="Paulsen I.T."/>
            <person name="Eisen J.A."/>
            <person name="Karp P.D."/>
            <person name="Bovee D. Sr."/>
            <person name="Chapman P."/>
            <person name="Clendenning J."/>
            <person name="Deatherage G."/>
            <person name="Gillet W."/>
            <person name="Grant C."/>
            <person name="Kutyavin T."/>
            <person name="Levy R."/>
            <person name="Li M.-J."/>
            <person name="McClelland E."/>
            <person name="Palmieri A."/>
            <person name="Raymond C."/>
            <person name="Rouse G."/>
            <person name="Saenphimmachak C."/>
            <person name="Wu Z."/>
            <person name="Romero P."/>
            <person name="Gordon D."/>
            <person name="Zhang S."/>
            <person name="Yoo H."/>
            <person name="Tao Y."/>
            <person name="Biddle P."/>
            <person name="Jung M."/>
            <person name="Krespan W."/>
            <person name="Perry M."/>
            <person name="Gordon-Kamm B."/>
            <person name="Liao L."/>
            <person name="Kim S."/>
            <person name="Hendrick C."/>
            <person name="Zhao Z.-Y."/>
            <person name="Dolan M."/>
            <person name="Chumley F."/>
            <person name="Tingey S.V."/>
            <person name="Tomb J.-F."/>
            <person name="Gordon M.P."/>
            <person name="Olson M.V."/>
            <person name="Nester E.W."/>
        </authorList>
    </citation>
    <scope>NUCLEOTIDE SEQUENCE [LARGE SCALE GENOMIC DNA]</scope>
    <source>
        <strain>C58 / ATCC 33970</strain>
    </source>
</reference>
<reference key="2">
    <citation type="journal article" date="2001" name="Science">
        <title>Genome sequence of the plant pathogen and biotechnology agent Agrobacterium tumefaciens C58.</title>
        <authorList>
            <person name="Goodner B."/>
            <person name="Hinkle G."/>
            <person name="Gattung S."/>
            <person name="Miller N."/>
            <person name="Blanchard M."/>
            <person name="Qurollo B."/>
            <person name="Goldman B.S."/>
            <person name="Cao Y."/>
            <person name="Askenazi M."/>
            <person name="Halling C."/>
            <person name="Mullin L."/>
            <person name="Houmiel K."/>
            <person name="Gordon J."/>
            <person name="Vaudin M."/>
            <person name="Iartchouk O."/>
            <person name="Epp A."/>
            <person name="Liu F."/>
            <person name="Wollam C."/>
            <person name="Allinger M."/>
            <person name="Doughty D."/>
            <person name="Scott C."/>
            <person name="Lappas C."/>
            <person name="Markelz B."/>
            <person name="Flanagan C."/>
            <person name="Crowell C."/>
            <person name="Gurson J."/>
            <person name="Lomo C."/>
            <person name="Sear C."/>
            <person name="Strub G."/>
            <person name="Cielo C."/>
            <person name="Slater S."/>
        </authorList>
    </citation>
    <scope>NUCLEOTIDE SEQUENCE [LARGE SCALE GENOMIC DNA]</scope>
    <source>
        <strain>C58 / ATCC 33970</strain>
    </source>
</reference>
<reference key="3">
    <citation type="journal article" date="2022" name="Nat. Commun.">
        <title>Peptidoglycan recycling mediated by an ABC transporter in the plant pathogen Agrobacterium tumefaciens.</title>
        <authorList>
            <person name="Gilmore M.C."/>
            <person name="Cava F."/>
        </authorList>
    </citation>
    <scope>FUNCTION</scope>
    <scope>DISRUPTION PHENOTYPE</scope>
    <source>
        <strain>C58 / ATCC 33970</strain>
    </source>
</reference>
<comment type="function">
    <text evidence="3 5 6">Part of the ABC transporter complex YejBEF-YepA involved in the uptake of muropeptides, the breakdown products of cell wall peptidoglycan (PubMed:36566216). The import of muropeptides into the cell enables peptidoglycan recycling, which is vital for cell wall integrity in this bacterium (PubMed:36566216). Is also probably part of the ABC transporter complex YejABEF, which is likely involved in broad-spectrum peptide import (Probable). Responsible for the translocation of the substrate across the membrane (Probable).</text>
</comment>
<comment type="subunit">
    <text evidence="6">The complex is composed of one ATP-binding protein (YejF), two transmembrane proteins (YejB and YejE) and a solute-binding protein (YepA or YejA).</text>
</comment>
<comment type="subcellular location">
    <subcellularLocation>
        <location evidence="6">Cell inner membrane</location>
        <topology evidence="1">Multi-pass membrane protein</topology>
    </subcellularLocation>
</comment>
<comment type="disruption phenotype">
    <text evidence="3">The deletion mutant is hypersensitive to ampicillin, in a manner only partly dependent on the beta-lactamase AmpC (PubMed:36566216). Deletion of the yejABEF operon leads to the accumulation of anhydromuramyl tri-, tetra- and pentapeptides in large quantities in the extracellular milieu (PubMed:36566216). The yejABEF mutant displays cell swelling and lysis as well as a severe growth defect (PubMed:36566216).</text>
</comment>
<comment type="similarity">
    <text evidence="5">Belongs to the binding-protein-dependent transport system permease family.</text>
</comment>
<protein>
    <recommendedName>
        <fullName evidence="5">Peptidoglycan transport system permease protein YejE</fullName>
    </recommendedName>
</protein>
<evidence type="ECO:0000255" key="1"/>
<evidence type="ECO:0000255" key="2">
    <source>
        <dbReference type="PROSITE-ProRule" id="PRU00441"/>
    </source>
</evidence>
<evidence type="ECO:0000269" key="3">
    <source>
    </source>
</evidence>
<evidence type="ECO:0000303" key="4">
    <source>
    </source>
</evidence>
<evidence type="ECO:0000305" key="5"/>
<evidence type="ECO:0000305" key="6">
    <source>
    </source>
</evidence>
<evidence type="ECO:0000312" key="7">
    <source>
        <dbReference type="EMBL" id="AAK86009.2"/>
    </source>
</evidence>
<organism>
    <name type="scientific">Agrobacterium fabrum (strain C58 / ATCC 33970)</name>
    <name type="common">Agrobacterium tumefaciens (strain C58)</name>
    <dbReference type="NCBI Taxonomy" id="176299"/>
    <lineage>
        <taxon>Bacteria</taxon>
        <taxon>Pseudomonadati</taxon>
        <taxon>Pseudomonadota</taxon>
        <taxon>Alphaproteobacteria</taxon>
        <taxon>Hyphomicrobiales</taxon>
        <taxon>Rhizobiaceae</taxon>
        <taxon>Rhizobium/Agrobacterium group</taxon>
        <taxon>Agrobacterium</taxon>
        <taxon>Agrobacterium tumefaciens complex</taxon>
    </lineage>
</organism>
<accession>Q7D203</accession>
<sequence>MSLAQPAGTETLVKPKRPWFSPTTKRRWQNFKANRRGYWSFWLFLILFFLSLIAEFIANDKPILASYKGEILVPVMVDYPEEKFGGFLAQTDYKSSFIQDEINANGWMIWPPIRYSYQTVNSNIPHSAPTAPFWLMDEKERCSAYPQGNADPGCTLGNLNWLGTDNQARDVTARMIYGFRISVLFGLTLTIASALVGVTAGAIQGYFGGWTDLLLQRFIEIWSSMPVLYILLIIAAILPPGFFVLLGIMLLFSWVGFVGIVRAEFLRARNFEYVRAARALGVGNWTIMFRHLLPNAMVATLTFLPFILSGSITTLTSLDFLGFGMPPGSPSLGEMIAQGKNNLQAPWLGLTAFFTMSIMLSLLIFVGEAVRDAFDPRKTFR</sequence>